<protein>
    <recommendedName>
        <fullName>Cytochrome b</fullName>
    </recommendedName>
    <alternativeName>
        <fullName>Complex III subunit 3</fullName>
    </alternativeName>
    <alternativeName>
        <fullName>Complex III subunit III</fullName>
    </alternativeName>
    <alternativeName>
        <fullName>Cytochrome b-c1 complex subunit 3</fullName>
    </alternativeName>
    <alternativeName>
        <fullName>Ubiquinol-cytochrome-c reductase complex cytochrome b subunit</fullName>
    </alternativeName>
</protein>
<comment type="function">
    <text evidence="2">Component of the ubiquinol-cytochrome c reductase complex (complex III or cytochrome b-c1 complex) that is part of the mitochondrial respiratory chain. The b-c1 complex mediates electron transfer from ubiquinol to cytochrome c. Contributes to the generation of a proton gradient across the mitochondrial membrane that is then used for ATP synthesis.</text>
</comment>
<comment type="cofactor">
    <cofactor evidence="2">
        <name>heme b</name>
        <dbReference type="ChEBI" id="CHEBI:60344"/>
    </cofactor>
    <text evidence="2">Binds 2 heme b groups non-covalently.</text>
</comment>
<comment type="subunit">
    <text evidence="2">The cytochrome bc1 complex contains 11 subunits: 3 respiratory subunits (MT-CYB, CYC1 and UQCRFS1), 2 core proteins (UQCRC1 and UQCRC2) and 6 low-molecular weight proteins (UQCRH/QCR6, UQCRB/QCR7, UQCRQ/QCR8, UQCR10/QCR9, UQCR11/QCR10 and a cleavage product of UQCRFS1). This cytochrome bc1 complex then forms a dimer.</text>
</comment>
<comment type="subcellular location">
    <subcellularLocation>
        <location evidence="2">Mitochondrion inner membrane</location>
        <topology evidence="2">Multi-pass membrane protein</topology>
    </subcellularLocation>
</comment>
<comment type="miscellaneous">
    <text evidence="1">Heme 1 (or BL or b562) is low-potential and absorbs at about 562 nm, and heme 2 (or BH or b566) is high-potential and absorbs at about 566 nm.</text>
</comment>
<comment type="similarity">
    <text evidence="3 4">Belongs to the cytochrome b family.</text>
</comment>
<comment type="caution">
    <text evidence="2">The full-length protein contains only eight transmembrane helices, not nine as predicted by bioinformatics tools.</text>
</comment>
<keyword id="KW-0249">Electron transport</keyword>
<keyword id="KW-0349">Heme</keyword>
<keyword id="KW-0408">Iron</keyword>
<keyword id="KW-0472">Membrane</keyword>
<keyword id="KW-0479">Metal-binding</keyword>
<keyword id="KW-0496">Mitochondrion</keyword>
<keyword id="KW-0999">Mitochondrion inner membrane</keyword>
<keyword id="KW-0679">Respiratory chain</keyword>
<keyword id="KW-0812">Transmembrane</keyword>
<keyword id="KW-1133">Transmembrane helix</keyword>
<keyword id="KW-0813">Transport</keyword>
<keyword id="KW-0830">Ubiquinone</keyword>
<feature type="chain" id="PRO_0000061640" description="Cytochrome b">
    <location>
        <begin position="1"/>
        <end position="379"/>
    </location>
</feature>
<feature type="transmembrane region" description="Helical" evidence="2">
    <location>
        <begin position="33"/>
        <end position="53"/>
    </location>
</feature>
<feature type="transmembrane region" description="Helical" evidence="2">
    <location>
        <begin position="77"/>
        <end position="98"/>
    </location>
</feature>
<feature type="transmembrane region" description="Helical" evidence="2">
    <location>
        <begin position="113"/>
        <end position="133"/>
    </location>
</feature>
<feature type="transmembrane region" description="Helical" evidence="2">
    <location>
        <begin position="178"/>
        <end position="198"/>
    </location>
</feature>
<feature type="transmembrane region" description="Helical" evidence="2">
    <location>
        <begin position="226"/>
        <end position="246"/>
    </location>
</feature>
<feature type="transmembrane region" description="Helical" evidence="2">
    <location>
        <begin position="288"/>
        <end position="308"/>
    </location>
</feature>
<feature type="transmembrane region" description="Helical" evidence="2">
    <location>
        <begin position="320"/>
        <end position="340"/>
    </location>
</feature>
<feature type="transmembrane region" description="Helical" evidence="2">
    <location>
        <begin position="347"/>
        <end position="367"/>
    </location>
</feature>
<feature type="binding site" description="axial binding residue" evidence="2">
    <location>
        <position position="83"/>
    </location>
    <ligand>
        <name>heme b</name>
        <dbReference type="ChEBI" id="CHEBI:60344"/>
        <label>b562</label>
    </ligand>
    <ligandPart>
        <name>Fe</name>
        <dbReference type="ChEBI" id="CHEBI:18248"/>
    </ligandPart>
</feature>
<feature type="binding site" description="axial binding residue" evidence="2">
    <location>
        <position position="97"/>
    </location>
    <ligand>
        <name>heme b</name>
        <dbReference type="ChEBI" id="CHEBI:60344"/>
        <label>b566</label>
    </ligand>
    <ligandPart>
        <name>Fe</name>
        <dbReference type="ChEBI" id="CHEBI:18248"/>
    </ligandPart>
</feature>
<feature type="binding site" description="axial binding residue" evidence="2">
    <location>
        <position position="182"/>
    </location>
    <ligand>
        <name>heme b</name>
        <dbReference type="ChEBI" id="CHEBI:60344"/>
        <label>b562</label>
    </ligand>
    <ligandPart>
        <name>Fe</name>
        <dbReference type="ChEBI" id="CHEBI:18248"/>
    </ligandPart>
</feature>
<feature type="binding site" description="axial binding residue" evidence="2">
    <location>
        <position position="196"/>
    </location>
    <ligand>
        <name>heme b</name>
        <dbReference type="ChEBI" id="CHEBI:60344"/>
        <label>b566</label>
    </ligand>
    <ligandPart>
        <name>Fe</name>
        <dbReference type="ChEBI" id="CHEBI:18248"/>
    </ligandPart>
</feature>
<feature type="binding site" evidence="2">
    <location>
        <position position="201"/>
    </location>
    <ligand>
        <name>a ubiquinone</name>
        <dbReference type="ChEBI" id="CHEBI:16389"/>
    </ligand>
</feature>
<geneLocation type="mitochondrion"/>
<gene>
    <name type="primary">MT-CYB</name>
    <name type="synonym">COB</name>
    <name type="synonym">CYTB</name>
    <name type="synonym">MTCYB</name>
</gene>
<organism>
    <name type="scientific">Tamias quadrivittatus</name>
    <name type="common">Colorado chipmunk</name>
    <name type="synonym">Neotamias quadrivittatus</name>
    <dbReference type="NCBI Taxonomy" id="45469"/>
    <lineage>
        <taxon>Eukaryota</taxon>
        <taxon>Metazoa</taxon>
        <taxon>Chordata</taxon>
        <taxon>Craniata</taxon>
        <taxon>Vertebrata</taxon>
        <taxon>Euteleostomi</taxon>
        <taxon>Mammalia</taxon>
        <taxon>Eutheria</taxon>
        <taxon>Euarchontoglires</taxon>
        <taxon>Glires</taxon>
        <taxon>Rodentia</taxon>
        <taxon>Sciuromorpha</taxon>
        <taxon>Sciuridae</taxon>
        <taxon>Xerinae</taxon>
        <taxon>Marmotini</taxon>
        <taxon>Tamias</taxon>
    </lineage>
</organism>
<evidence type="ECO:0000250" key="1"/>
<evidence type="ECO:0000250" key="2">
    <source>
        <dbReference type="UniProtKB" id="P00157"/>
    </source>
</evidence>
<evidence type="ECO:0000255" key="3">
    <source>
        <dbReference type="PROSITE-ProRule" id="PRU00967"/>
    </source>
</evidence>
<evidence type="ECO:0000255" key="4">
    <source>
        <dbReference type="PROSITE-ProRule" id="PRU00968"/>
    </source>
</evidence>
<sequence>MTNIRKTHPLIKIINHSFIDLPAPSNISAWWNFGSLLGICLIIQILTGLFLAMHYTSDTMTAFSSVTHICRDVNYGWLIRYMHANGASMFFICLFLHVGRGLYYGSYTYFETWNIGVILLFAVMATAFMGYVLPWGQMSFWGATVITNLLSAIPYIGTTLVEWIWGGFSVDKATLTRFFAFHFILPFIITALVMVHLLFLHETGSNNPSGLISDSDKIPFHPYYTIKDILGIILLILVLMILVLFSPDLLGDPDNYTPANPLNTPPHIKPEWYFLFAYAILRSIPNKLGGVLALVLSILILMLFPILHMSKQRSMMFRPLSQCMFWILVADLFTLTWIGGQPVEYPFIIIGQLASILYFMIILLILPTISLFENKLLKW</sequence>
<proteinExistence type="inferred from homology"/>
<reference key="1">
    <citation type="journal article" date="2001" name="Mol. Phylogenet. Evol.">
        <title>Molecular phylogeny of the chipmunks inferred from mitochondrial cytochrome b and cytochrome oxidase II gene sequences.</title>
        <authorList>
            <person name="Piaggio A.J."/>
            <person name="Spicer G.S."/>
        </authorList>
    </citation>
    <scope>NUCLEOTIDE SEQUENCE [GENOMIC DNA]</scope>
    <source>
        <strain>Isolate MSB 61498 / NK 4053</strain>
        <strain>Isolate MSB 80142 / NK 56170</strain>
    </source>
</reference>
<accession>Q94Q38</accession>
<dbReference type="EMBL" id="AF147658">
    <property type="protein sequence ID" value="AAL14057.1"/>
    <property type="molecule type" value="Genomic_DNA"/>
</dbReference>
<dbReference type="EMBL" id="AF147660">
    <property type="protein sequence ID" value="AAL14059.1"/>
    <property type="molecule type" value="Genomic_DNA"/>
</dbReference>
<dbReference type="RefSeq" id="YP_009332035.1">
    <property type="nucleotide sequence ID" value="NC_032370.1"/>
</dbReference>
<dbReference type="SMR" id="Q94Q38"/>
<dbReference type="GeneID" id="30688801"/>
<dbReference type="CTD" id="4519"/>
<dbReference type="GO" id="GO:0005743">
    <property type="term" value="C:mitochondrial inner membrane"/>
    <property type="evidence" value="ECO:0007669"/>
    <property type="project" value="UniProtKB-SubCell"/>
</dbReference>
<dbReference type="GO" id="GO:0045275">
    <property type="term" value="C:respiratory chain complex III"/>
    <property type="evidence" value="ECO:0007669"/>
    <property type="project" value="InterPro"/>
</dbReference>
<dbReference type="GO" id="GO:0046872">
    <property type="term" value="F:metal ion binding"/>
    <property type="evidence" value="ECO:0007669"/>
    <property type="project" value="UniProtKB-KW"/>
</dbReference>
<dbReference type="GO" id="GO:0008121">
    <property type="term" value="F:ubiquinol-cytochrome-c reductase activity"/>
    <property type="evidence" value="ECO:0007669"/>
    <property type="project" value="InterPro"/>
</dbReference>
<dbReference type="GO" id="GO:0006122">
    <property type="term" value="P:mitochondrial electron transport, ubiquinol to cytochrome c"/>
    <property type="evidence" value="ECO:0007669"/>
    <property type="project" value="TreeGrafter"/>
</dbReference>
<dbReference type="CDD" id="cd00290">
    <property type="entry name" value="cytochrome_b_C"/>
    <property type="match status" value="1"/>
</dbReference>
<dbReference type="CDD" id="cd00284">
    <property type="entry name" value="Cytochrome_b_N"/>
    <property type="match status" value="1"/>
</dbReference>
<dbReference type="FunFam" id="1.20.810.10:FF:000002">
    <property type="entry name" value="Cytochrome b"/>
    <property type="match status" value="1"/>
</dbReference>
<dbReference type="Gene3D" id="1.20.810.10">
    <property type="entry name" value="Cytochrome Bc1 Complex, Chain C"/>
    <property type="match status" value="1"/>
</dbReference>
<dbReference type="InterPro" id="IPR005798">
    <property type="entry name" value="Cyt_b/b6_C"/>
</dbReference>
<dbReference type="InterPro" id="IPR036150">
    <property type="entry name" value="Cyt_b/b6_C_sf"/>
</dbReference>
<dbReference type="InterPro" id="IPR005797">
    <property type="entry name" value="Cyt_b/b6_N"/>
</dbReference>
<dbReference type="InterPro" id="IPR027387">
    <property type="entry name" value="Cytb/b6-like_sf"/>
</dbReference>
<dbReference type="InterPro" id="IPR030689">
    <property type="entry name" value="Cytochrome_b"/>
</dbReference>
<dbReference type="InterPro" id="IPR048260">
    <property type="entry name" value="Cytochrome_b_C_euk/bac"/>
</dbReference>
<dbReference type="InterPro" id="IPR048259">
    <property type="entry name" value="Cytochrome_b_N_euk/bac"/>
</dbReference>
<dbReference type="InterPro" id="IPR016174">
    <property type="entry name" value="Di-haem_cyt_TM"/>
</dbReference>
<dbReference type="PANTHER" id="PTHR19271">
    <property type="entry name" value="CYTOCHROME B"/>
    <property type="match status" value="1"/>
</dbReference>
<dbReference type="PANTHER" id="PTHR19271:SF16">
    <property type="entry name" value="CYTOCHROME B"/>
    <property type="match status" value="1"/>
</dbReference>
<dbReference type="Pfam" id="PF00032">
    <property type="entry name" value="Cytochrom_B_C"/>
    <property type="match status" value="1"/>
</dbReference>
<dbReference type="Pfam" id="PF00033">
    <property type="entry name" value="Cytochrome_B"/>
    <property type="match status" value="1"/>
</dbReference>
<dbReference type="PIRSF" id="PIRSF038885">
    <property type="entry name" value="COB"/>
    <property type="match status" value="1"/>
</dbReference>
<dbReference type="SUPFAM" id="SSF81648">
    <property type="entry name" value="a domain/subunit of cytochrome bc1 complex (Ubiquinol-cytochrome c reductase)"/>
    <property type="match status" value="1"/>
</dbReference>
<dbReference type="SUPFAM" id="SSF81342">
    <property type="entry name" value="Transmembrane di-heme cytochromes"/>
    <property type="match status" value="1"/>
</dbReference>
<dbReference type="PROSITE" id="PS51003">
    <property type="entry name" value="CYTB_CTER"/>
    <property type="match status" value="1"/>
</dbReference>
<dbReference type="PROSITE" id="PS51002">
    <property type="entry name" value="CYTB_NTER"/>
    <property type="match status" value="1"/>
</dbReference>
<name>CYB_TAMQU</name>